<gene>
    <name type="ordered locus">At4g34450</name>
    <name type="ORF">T4L20.30</name>
</gene>
<proteinExistence type="evidence at protein level"/>
<organism>
    <name type="scientific">Arabidopsis thaliana</name>
    <name type="common">Mouse-ear cress</name>
    <dbReference type="NCBI Taxonomy" id="3702"/>
    <lineage>
        <taxon>Eukaryota</taxon>
        <taxon>Viridiplantae</taxon>
        <taxon>Streptophyta</taxon>
        <taxon>Embryophyta</taxon>
        <taxon>Tracheophyta</taxon>
        <taxon>Spermatophyta</taxon>
        <taxon>Magnoliopsida</taxon>
        <taxon>eudicotyledons</taxon>
        <taxon>Gunneridae</taxon>
        <taxon>Pentapetalae</taxon>
        <taxon>rosids</taxon>
        <taxon>malvids</taxon>
        <taxon>Brassicales</taxon>
        <taxon>Brassicaceae</taxon>
        <taxon>Camelineae</taxon>
        <taxon>Arabidopsis</taxon>
    </lineage>
</organism>
<dbReference type="EMBL" id="AL023094">
    <property type="protein sequence ID" value="CAA18824.1"/>
    <property type="status" value="ALT_SEQ"/>
    <property type="molecule type" value="Genomic_DNA"/>
</dbReference>
<dbReference type="EMBL" id="AL161585">
    <property type="protein sequence ID" value="CAB80162.1"/>
    <property type="status" value="ALT_SEQ"/>
    <property type="molecule type" value="Genomic_DNA"/>
</dbReference>
<dbReference type="EMBL" id="CP002687">
    <property type="protein sequence ID" value="AEE86378.1"/>
    <property type="molecule type" value="Genomic_DNA"/>
</dbReference>
<dbReference type="EMBL" id="AK221839">
    <property type="protein sequence ID" value="BAD94079.1"/>
    <property type="molecule type" value="mRNA"/>
</dbReference>
<dbReference type="EMBL" id="AK226533">
    <property type="protein sequence ID" value="BAE98672.1"/>
    <property type="molecule type" value="mRNA"/>
</dbReference>
<dbReference type="PIR" id="T05265">
    <property type="entry name" value="T05265"/>
</dbReference>
<dbReference type="RefSeq" id="NP_195171.2">
    <property type="nucleotide sequence ID" value="NM_119610.4"/>
</dbReference>
<dbReference type="SMR" id="Q0WW26"/>
<dbReference type="BioGRID" id="14878">
    <property type="interactions" value="76"/>
</dbReference>
<dbReference type="FunCoup" id="Q0WW26">
    <property type="interactions" value="5061"/>
</dbReference>
<dbReference type="IntAct" id="Q0WW26">
    <property type="interactions" value="1"/>
</dbReference>
<dbReference type="STRING" id="3702.Q0WW26"/>
<dbReference type="iPTMnet" id="Q0WW26"/>
<dbReference type="SwissPalm" id="Q0WW26"/>
<dbReference type="PaxDb" id="3702-AT4G34450.1"/>
<dbReference type="ProteomicsDB" id="240951"/>
<dbReference type="EnsemblPlants" id="AT4G34450.1">
    <property type="protein sequence ID" value="AT4G34450.1"/>
    <property type="gene ID" value="AT4G34450"/>
</dbReference>
<dbReference type="GeneID" id="829596"/>
<dbReference type="Gramene" id="AT4G34450.1">
    <property type="protein sequence ID" value="AT4G34450.1"/>
    <property type="gene ID" value="AT4G34450"/>
</dbReference>
<dbReference type="KEGG" id="ath:AT4G34450"/>
<dbReference type="Araport" id="AT4G34450"/>
<dbReference type="TAIR" id="AT4G34450"/>
<dbReference type="eggNOG" id="KOG1078">
    <property type="taxonomic scope" value="Eukaryota"/>
</dbReference>
<dbReference type="HOGENOM" id="CLU_010353_2_0_1"/>
<dbReference type="InParanoid" id="Q0WW26"/>
<dbReference type="OMA" id="DMANHGQ"/>
<dbReference type="OrthoDB" id="1074925at2759"/>
<dbReference type="PhylomeDB" id="Q0WW26"/>
<dbReference type="PRO" id="PR:Q0WW26"/>
<dbReference type="Proteomes" id="UP000006548">
    <property type="component" value="Chromosome 4"/>
</dbReference>
<dbReference type="ExpressionAtlas" id="Q0WW26">
    <property type="expression patterns" value="baseline and differential"/>
</dbReference>
<dbReference type="GO" id="GO:0009507">
    <property type="term" value="C:chloroplast"/>
    <property type="evidence" value="ECO:0007005"/>
    <property type="project" value="TAIR"/>
</dbReference>
<dbReference type="GO" id="GO:0030126">
    <property type="term" value="C:COPI vesicle coat"/>
    <property type="evidence" value="ECO:0007669"/>
    <property type="project" value="InterPro"/>
</dbReference>
<dbReference type="GO" id="GO:0000139">
    <property type="term" value="C:Golgi membrane"/>
    <property type="evidence" value="ECO:0007669"/>
    <property type="project" value="UniProtKB-SubCell"/>
</dbReference>
<dbReference type="GO" id="GO:0005886">
    <property type="term" value="C:plasma membrane"/>
    <property type="evidence" value="ECO:0007005"/>
    <property type="project" value="TAIR"/>
</dbReference>
<dbReference type="GO" id="GO:0009506">
    <property type="term" value="C:plasmodesma"/>
    <property type="evidence" value="ECO:0007005"/>
    <property type="project" value="TAIR"/>
</dbReference>
<dbReference type="GO" id="GO:0005198">
    <property type="term" value="F:structural molecule activity"/>
    <property type="evidence" value="ECO:0007669"/>
    <property type="project" value="InterPro"/>
</dbReference>
<dbReference type="GO" id="GO:0006886">
    <property type="term" value="P:intracellular protein transport"/>
    <property type="evidence" value="ECO:0007669"/>
    <property type="project" value="InterPro"/>
</dbReference>
<dbReference type="GO" id="GO:0016192">
    <property type="term" value="P:vesicle-mediated transport"/>
    <property type="evidence" value="ECO:0007669"/>
    <property type="project" value="UniProtKB-KW"/>
</dbReference>
<dbReference type="FunFam" id="1.25.10.10:FF:000071">
    <property type="entry name" value="Coatomer subunit gamma"/>
    <property type="match status" value="1"/>
</dbReference>
<dbReference type="FunFam" id="1.25.10.10:FF:000078">
    <property type="entry name" value="Coatomer subunit gamma"/>
    <property type="match status" value="1"/>
</dbReference>
<dbReference type="FunFam" id="2.60.40.1480:FF:000002">
    <property type="entry name" value="Coatomer subunit gamma"/>
    <property type="match status" value="1"/>
</dbReference>
<dbReference type="FunFam" id="3.30.310.10:FF:000011">
    <property type="entry name" value="Coatomer subunit gamma"/>
    <property type="match status" value="1"/>
</dbReference>
<dbReference type="Gene3D" id="2.60.40.1480">
    <property type="entry name" value="Coatomer, gamma subunit, appendage domain"/>
    <property type="match status" value="1"/>
</dbReference>
<dbReference type="Gene3D" id="1.25.10.10">
    <property type="entry name" value="Leucine-rich Repeat Variant"/>
    <property type="match status" value="2"/>
</dbReference>
<dbReference type="Gene3D" id="3.30.310.10">
    <property type="entry name" value="TATA-Binding Protein"/>
    <property type="match status" value="1"/>
</dbReference>
<dbReference type="InterPro" id="IPR011989">
    <property type="entry name" value="ARM-like"/>
</dbReference>
<dbReference type="InterPro" id="IPR016024">
    <property type="entry name" value="ARM-type_fold"/>
</dbReference>
<dbReference type="InterPro" id="IPR002553">
    <property type="entry name" value="Clathrin/coatomer_adapt-like_N"/>
</dbReference>
<dbReference type="InterPro" id="IPR013041">
    <property type="entry name" value="Clathrin_app_Ig-like_sf"/>
</dbReference>
<dbReference type="InterPro" id="IPR009028">
    <property type="entry name" value="Coatomer/calthrin_app_sub_C"/>
</dbReference>
<dbReference type="InterPro" id="IPR032154">
    <property type="entry name" value="Coatomer_g_Cpla"/>
</dbReference>
<dbReference type="InterPro" id="IPR017106">
    <property type="entry name" value="Coatomer_gsu"/>
</dbReference>
<dbReference type="InterPro" id="IPR013040">
    <property type="entry name" value="Coatomer_gsu_app_Ig-like_dom"/>
</dbReference>
<dbReference type="InterPro" id="IPR037067">
    <property type="entry name" value="Coatomer_gsu_app_sf"/>
</dbReference>
<dbReference type="InterPro" id="IPR012295">
    <property type="entry name" value="TBP_dom_sf"/>
</dbReference>
<dbReference type="PANTHER" id="PTHR10261">
    <property type="entry name" value="COATOMER SUBUNIT GAMMA"/>
    <property type="match status" value="1"/>
</dbReference>
<dbReference type="PANTHER" id="PTHR10261:SF0">
    <property type="entry name" value="COATOMER SUBUNIT GAMMA-2"/>
    <property type="match status" value="1"/>
</dbReference>
<dbReference type="Pfam" id="PF01602">
    <property type="entry name" value="Adaptin_N"/>
    <property type="match status" value="1"/>
</dbReference>
<dbReference type="Pfam" id="PF16381">
    <property type="entry name" value="Coatomer_g_Cpla"/>
    <property type="match status" value="1"/>
</dbReference>
<dbReference type="Pfam" id="PF08752">
    <property type="entry name" value="COP-gamma_platf"/>
    <property type="match status" value="1"/>
</dbReference>
<dbReference type="PIRSF" id="PIRSF037093">
    <property type="entry name" value="Coatomer_gamma_subunit"/>
    <property type="match status" value="1"/>
</dbReference>
<dbReference type="SUPFAM" id="SSF48371">
    <property type="entry name" value="ARM repeat"/>
    <property type="match status" value="1"/>
</dbReference>
<dbReference type="SUPFAM" id="SSF49348">
    <property type="entry name" value="Clathrin adaptor appendage domain"/>
    <property type="match status" value="1"/>
</dbReference>
<dbReference type="SUPFAM" id="SSF55711">
    <property type="entry name" value="Subdomain of clathrin and coatomer appendage domain"/>
    <property type="match status" value="1"/>
</dbReference>
<reference key="1">
    <citation type="journal article" date="1999" name="Nature">
        <title>Sequence and analysis of chromosome 4 of the plant Arabidopsis thaliana.</title>
        <authorList>
            <person name="Mayer K.F.X."/>
            <person name="Schueller C."/>
            <person name="Wambutt R."/>
            <person name="Murphy G."/>
            <person name="Volckaert G."/>
            <person name="Pohl T."/>
            <person name="Duesterhoeft A."/>
            <person name="Stiekema W."/>
            <person name="Entian K.-D."/>
            <person name="Terryn N."/>
            <person name="Harris B."/>
            <person name="Ansorge W."/>
            <person name="Brandt P."/>
            <person name="Grivell L.A."/>
            <person name="Rieger M."/>
            <person name="Weichselgartner M."/>
            <person name="de Simone V."/>
            <person name="Obermaier B."/>
            <person name="Mache R."/>
            <person name="Mueller M."/>
            <person name="Kreis M."/>
            <person name="Delseny M."/>
            <person name="Puigdomenech P."/>
            <person name="Watson M."/>
            <person name="Schmidtheini T."/>
            <person name="Reichert B."/>
            <person name="Portetelle D."/>
            <person name="Perez-Alonso M."/>
            <person name="Boutry M."/>
            <person name="Bancroft I."/>
            <person name="Vos P."/>
            <person name="Hoheisel J."/>
            <person name="Zimmermann W."/>
            <person name="Wedler H."/>
            <person name="Ridley P."/>
            <person name="Langham S.-A."/>
            <person name="McCullagh B."/>
            <person name="Bilham L."/>
            <person name="Robben J."/>
            <person name="van der Schueren J."/>
            <person name="Grymonprez B."/>
            <person name="Chuang Y.-J."/>
            <person name="Vandenbussche F."/>
            <person name="Braeken M."/>
            <person name="Weltjens I."/>
            <person name="Voet M."/>
            <person name="Bastiaens I."/>
            <person name="Aert R."/>
            <person name="Defoor E."/>
            <person name="Weitzenegger T."/>
            <person name="Bothe G."/>
            <person name="Ramsperger U."/>
            <person name="Hilbert H."/>
            <person name="Braun M."/>
            <person name="Holzer E."/>
            <person name="Brandt A."/>
            <person name="Peters S."/>
            <person name="van Staveren M."/>
            <person name="Dirkse W."/>
            <person name="Mooijman P."/>
            <person name="Klein Lankhorst R."/>
            <person name="Rose M."/>
            <person name="Hauf J."/>
            <person name="Koetter P."/>
            <person name="Berneiser S."/>
            <person name="Hempel S."/>
            <person name="Feldpausch M."/>
            <person name="Lamberth S."/>
            <person name="Van den Daele H."/>
            <person name="De Keyser A."/>
            <person name="Buysshaert C."/>
            <person name="Gielen J."/>
            <person name="Villarroel R."/>
            <person name="De Clercq R."/>
            <person name="van Montagu M."/>
            <person name="Rogers J."/>
            <person name="Cronin A."/>
            <person name="Quail M.A."/>
            <person name="Bray-Allen S."/>
            <person name="Clark L."/>
            <person name="Doggett J."/>
            <person name="Hall S."/>
            <person name="Kay M."/>
            <person name="Lennard N."/>
            <person name="McLay K."/>
            <person name="Mayes R."/>
            <person name="Pettett A."/>
            <person name="Rajandream M.A."/>
            <person name="Lyne M."/>
            <person name="Benes V."/>
            <person name="Rechmann S."/>
            <person name="Borkova D."/>
            <person name="Bloecker H."/>
            <person name="Scharfe M."/>
            <person name="Grimm M."/>
            <person name="Loehnert T.-H."/>
            <person name="Dose S."/>
            <person name="de Haan M."/>
            <person name="Maarse A.C."/>
            <person name="Schaefer M."/>
            <person name="Mueller-Auer S."/>
            <person name="Gabel C."/>
            <person name="Fuchs M."/>
            <person name="Fartmann B."/>
            <person name="Granderath K."/>
            <person name="Dauner D."/>
            <person name="Herzl A."/>
            <person name="Neumann S."/>
            <person name="Argiriou A."/>
            <person name="Vitale D."/>
            <person name="Liguori R."/>
            <person name="Piravandi E."/>
            <person name="Massenet O."/>
            <person name="Quigley F."/>
            <person name="Clabauld G."/>
            <person name="Muendlein A."/>
            <person name="Felber R."/>
            <person name="Schnabl S."/>
            <person name="Hiller R."/>
            <person name="Schmidt W."/>
            <person name="Lecharny A."/>
            <person name="Aubourg S."/>
            <person name="Chefdor F."/>
            <person name="Cooke R."/>
            <person name="Berger C."/>
            <person name="Monfort A."/>
            <person name="Casacuberta E."/>
            <person name="Gibbons T."/>
            <person name="Weber N."/>
            <person name="Vandenbol M."/>
            <person name="Bargues M."/>
            <person name="Terol J."/>
            <person name="Torres A."/>
            <person name="Perez-Perez A."/>
            <person name="Purnelle B."/>
            <person name="Bent E."/>
            <person name="Johnson S."/>
            <person name="Tacon D."/>
            <person name="Jesse T."/>
            <person name="Heijnen L."/>
            <person name="Schwarz S."/>
            <person name="Scholler P."/>
            <person name="Heber S."/>
            <person name="Francs P."/>
            <person name="Bielke C."/>
            <person name="Frishman D."/>
            <person name="Haase D."/>
            <person name="Lemcke K."/>
            <person name="Mewes H.-W."/>
            <person name="Stocker S."/>
            <person name="Zaccaria P."/>
            <person name="Bevan M."/>
            <person name="Wilson R.K."/>
            <person name="de la Bastide M."/>
            <person name="Habermann K."/>
            <person name="Parnell L."/>
            <person name="Dedhia N."/>
            <person name="Gnoj L."/>
            <person name="Schutz K."/>
            <person name="Huang E."/>
            <person name="Spiegel L."/>
            <person name="Sekhon M."/>
            <person name="Murray J."/>
            <person name="Sheet P."/>
            <person name="Cordes M."/>
            <person name="Abu-Threideh J."/>
            <person name="Stoneking T."/>
            <person name="Kalicki J."/>
            <person name="Graves T."/>
            <person name="Harmon G."/>
            <person name="Edwards J."/>
            <person name="Latreille P."/>
            <person name="Courtney L."/>
            <person name="Cloud J."/>
            <person name="Abbott A."/>
            <person name="Scott K."/>
            <person name="Johnson D."/>
            <person name="Minx P."/>
            <person name="Bentley D."/>
            <person name="Fulton B."/>
            <person name="Miller N."/>
            <person name="Greco T."/>
            <person name="Kemp K."/>
            <person name="Kramer J."/>
            <person name="Fulton L."/>
            <person name="Mardis E."/>
            <person name="Dante M."/>
            <person name="Pepin K."/>
            <person name="Hillier L.W."/>
            <person name="Nelson J."/>
            <person name="Spieth J."/>
            <person name="Ryan E."/>
            <person name="Andrews S."/>
            <person name="Geisel C."/>
            <person name="Layman D."/>
            <person name="Du H."/>
            <person name="Ali J."/>
            <person name="Berghoff A."/>
            <person name="Jones K."/>
            <person name="Drone K."/>
            <person name="Cotton M."/>
            <person name="Joshu C."/>
            <person name="Antonoiu B."/>
            <person name="Zidanic M."/>
            <person name="Strong C."/>
            <person name="Sun H."/>
            <person name="Lamar B."/>
            <person name="Yordan C."/>
            <person name="Ma P."/>
            <person name="Zhong J."/>
            <person name="Preston R."/>
            <person name="Vil D."/>
            <person name="Shekher M."/>
            <person name="Matero A."/>
            <person name="Shah R."/>
            <person name="Swaby I.K."/>
            <person name="O'Shaughnessy A."/>
            <person name="Rodriguez M."/>
            <person name="Hoffman J."/>
            <person name="Till S."/>
            <person name="Granat S."/>
            <person name="Shohdy N."/>
            <person name="Hasegawa A."/>
            <person name="Hameed A."/>
            <person name="Lodhi M."/>
            <person name="Johnson A."/>
            <person name="Chen E."/>
            <person name="Marra M.A."/>
            <person name="Martienssen R."/>
            <person name="McCombie W.R."/>
        </authorList>
    </citation>
    <scope>NUCLEOTIDE SEQUENCE [LARGE SCALE GENOMIC DNA]</scope>
    <source>
        <strain>cv. Columbia</strain>
    </source>
</reference>
<reference key="2">
    <citation type="journal article" date="2017" name="Plant J.">
        <title>Araport11: a complete reannotation of the Arabidopsis thaliana reference genome.</title>
        <authorList>
            <person name="Cheng C.Y."/>
            <person name="Krishnakumar V."/>
            <person name="Chan A.P."/>
            <person name="Thibaud-Nissen F."/>
            <person name="Schobel S."/>
            <person name="Town C.D."/>
        </authorList>
    </citation>
    <scope>GENOME REANNOTATION</scope>
    <source>
        <strain>cv. Columbia</strain>
    </source>
</reference>
<reference key="3">
    <citation type="submission" date="2006-07" db="EMBL/GenBank/DDBJ databases">
        <title>Large-scale analysis of RIKEN Arabidopsis full-length (RAFL) cDNAs.</title>
        <authorList>
            <person name="Totoki Y."/>
            <person name="Seki M."/>
            <person name="Ishida J."/>
            <person name="Nakajima M."/>
            <person name="Enju A."/>
            <person name="Kamiya A."/>
            <person name="Narusaka M."/>
            <person name="Shin-i T."/>
            <person name="Nakagawa M."/>
            <person name="Sakamoto N."/>
            <person name="Oishi K."/>
            <person name="Kohara Y."/>
            <person name="Kobayashi M."/>
            <person name="Toyoda A."/>
            <person name="Sakaki Y."/>
            <person name="Sakurai T."/>
            <person name="Iida K."/>
            <person name="Akiyama K."/>
            <person name="Satou M."/>
            <person name="Toyoda T."/>
            <person name="Konagaya A."/>
            <person name="Carninci P."/>
            <person name="Kawai J."/>
            <person name="Hayashizaki Y."/>
            <person name="Shinozaki K."/>
        </authorList>
    </citation>
    <scope>NUCLEOTIDE SEQUENCE [LARGE SCALE MRNA] OF 217-886</scope>
    <source>
        <strain>cv. Columbia</strain>
    </source>
</reference>
<reference key="4">
    <citation type="journal article" date="2009" name="J. Proteomics">
        <title>Phosphoproteomic analysis of nuclei-enriched fractions from Arabidopsis thaliana.</title>
        <authorList>
            <person name="Jones A.M.E."/>
            <person name="MacLean D."/>
            <person name="Studholme D.J."/>
            <person name="Serna-Sanz A."/>
            <person name="Andreasson E."/>
            <person name="Rathjen J.P."/>
            <person name="Peck S.C."/>
        </authorList>
    </citation>
    <scope>IDENTIFICATION BY MASS SPECTROMETRY [LARGE SCALE ANALYSIS]</scope>
    <source>
        <strain>cv. Columbia</strain>
    </source>
</reference>
<comment type="function">
    <text evidence="1">The coatomer is a cytosolic protein complex that binds to dilysine motifs and reversibly associates with Golgi non-clathrin-coated vesicles, which further mediate biosynthetic protein transport from the ER, via the Golgi up to the trans Golgi network. Coatomer complex is required for budding from Golgi membranes, and is essential for the retrograde Golgi-to-ER transport of dilysine-tagged proteins (By similarity).</text>
</comment>
<comment type="subunit">
    <text evidence="1">Oligomeric complex that consists of at least the alpha, beta, beta', gamma, delta, epsilon and zeta subunits.</text>
</comment>
<comment type="subcellular location">
    <subcellularLocation>
        <location evidence="1">Cytoplasm</location>
    </subcellularLocation>
    <subcellularLocation>
        <location evidence="1">Golgi apparatus membrane</location>
        <topology evidence="1">Peripheral membrane protein</topology>
        <orientation evidence="1">Cytoplasmic side</orientation>
    </subcellularLocation>
    <subcellularLocation>
        <location evidence="1">Cytoplasmic vesicle</location>
        <location evidence="1">COPI-coated vesicle membrane</location>
        <topology evidence="1">Peripheral membrane protein</topology>
        <orientation evidence="1">Cytoplasmic side</orientation>
    </subcellularLocation>
    <text evidence="1">The coatomer is cytoplasmic or polymerized on the cytoplasmic side of the Golgi, as well as on the vesicles/buds originating from it.</text>
</comment>
<comment type="similarity">
    <text evidence="3">Belongs to the COPG family.</text>
</comment>
<comment type="sequence caution" evidence="3">
    <conflict type="erroneous gene model prediction">
        <sequence resource="EMBL-CDS" id="CAA18824"/>
    </conflict>
</comment>
<comment type="sequence caution" evidence="3">
    <conflict type="erroneous gene model prediction">
        <sequence resource="EMBL-CDS" id="CAB80162"/>
    </conflict>
</comment>
<evidence type="ECO:0000250" key="1"/>
<evidence type="ECO:0000256" key="2">
    <source>
        <dbReference type="SAM" id="MobiDB-lite"/>
    </source>
</evidence>
<evidence type="ECO:0000305" key="3"/>
<sequence>MAQPLVKKDDDHDDELEYSPFMGIEKGAVLQEARVFNDPQVDPRRCSQVITKLLYLLNQGESFTKVEATEVFFSVTKLFQSKDTGLRRMVYLIIKELSPSSDEVIIVTSSLMKDMNSKIDMYRANAIRVLCRIIDGTLLTQIERYLKQAIVDKNPVVSSAALVSGLHLLKTNPEIVKRWSNEVQEGIQSRSALVQFHALALLHQIRQNDRLAVSKLVGSLTRGSVRSPLAQCLLIRYTSQVIRDMANHGQSGERPFYEFLESCLRHKAEMVILEAARAITELDGVTSRELTPAITVLQLFLSSPRPVLRFAAVRTLNKVAMTHPMAVTNCNIDMESLISDQNRSIATLAITTLLKTGNESSVERLMKQITNFMSDIADEFKIVVVDAIRSLCVKFPLKYRSLMTFLSNILREEGGFEYKRAIVDSIVTIIRDIPDAKESGLLHLCEFIEDCEFTYLSTQILHFLGIEGPNTSDPSKYIRYIYNRVHLENATVRAAAVSTLAKFGFMVESLKPRITVLLKRCIYDSDDEVRDRATLYLSVLGGDGTVDTDKESKDFLFGSLEVPLVNMETSLKNYEPSEEAFDINSVPKEVKSQPLAEKKAQGKKPTGLGAPPAAPASGFDGYERLLSSIPEFAAFGKLFKSSLPVELTEAETEYAVNVVKHIFDSHVVFQYNCTNTIPEQLLERVNVIVDASEAEEFSEVTSKALNSLPYDSPGQAFVVFEKPAGVPAVGKFSNTLTFVVKEVDPSTGEAEDDGVEDEYQLEDLEVVAGDYMVKVGVSNFRNAWESMDEEDERVDEYGLGQRESLGEAVKAVMDLLGMQTCEGTETIPLNARSHTCLLSGVYIGNVKVLVRAQFGMDSSKDIAMKLTVRAEDVSVAEAIHEIVASG</sequence>
<name>COPG_ARATH</name>
<feature type="chain" id="PRO_0000285627" description="Coatomer subunit gamma">
    <location>
        <begin position="1"/>
        <end position="886"/>
    </location>
</feature>
<feature type="repeat" description="HEAT 1">
    <location>
        <begin position="66"/>
        <end position="103"/>
    </location>
</feature>
<feature type="repeat" description="HEAT 2">
    <location>
        <begin position="288"/>
        <end position="325"/>
    </location>
</feature>
<feature type="repeat" description="HEAT 3">
    <location>
        <begin position="327"/>
        <end position="359"/>
    </location>
</feature>
<feature type="repeat" description="HEAT 4">
    <location>
        <begin position="360"/>
        <end position="397"/>
    </location>
</feature>
<feature type="repeat" description="HEAT 5">
    <location>
        <begin position="472"/>
        <end position="509"/>
    </location>
</feature>
<feature type="region of interest" description="Disordered" evidence="2">
    <location>
        <begin position="592"/>
        <end position="613"/>
    </location>
</feature>
<protein>
    <recommendedName>
        <fullName>Coatomer subunit gamma</fullName>
    </recommendedName>
    <alternativeName>
        <fullName>Gamma-coat protein</fullName>
        <shortName>Gamma-COP</shortName>
    </alternativeName>
</protein>
<accession>Q0WW26</accession>
<accession>O65673</accession>
<accession>Q56X38</accession>
<keyword id="KW-0963">Cytoplasm</keyword>
<keyword id="KW-0968">Cytoplasmic vesicle</keyword>
<keyword id="KW-0931">ER-Golgi transport</keyword>
<keyword id="KW-0333">Golgi apparatus</keyword>
<keyword id="KW-0472">Membrane</keyword>
<keyword id="KW-0653">Protein transport</keyword>
<keyword id="KW-1185">Reference proteome</keyword>
<keyword id="KW-0677">Repeat</keyword>
<keyword id="KW-0813">Transport</keyword>